<reference key="1">
    <citation type="journal article" date="1998" name="Development">
        <title>Regulation of neuronal specification in the zebrafish spinal cord by Delta function.</title>
        <authorList>
            <person name="Appel B."/>
            <person name="Eisen J.S."/>
        </authorList>
    </citation>
    <scope>NUCLEOTIDE SEQUENCE [MRNA]</scope>
    <scope>FUNCTION</scope>
    <scope>TISSUE SPECIFICITY</scope>
    <scope>DEVELOPMENTAL STAGE</scope>
</reference>
<reference key="2">
    <citation type="submission" date="2004-07" db="EMBL/GenBank/DDBJ databases">
        <authorList>
            <consortium name="NIH - Zebrafish Gene Collection (ZGC) project"/>
        </authorList>
    </citation>
    <scope>NUCLEOTIDE SEQUENCE [LARGE SCALE MRNA]</scope>
    <source>
        <tissue>Embryo</tissue>
    </source>
</reference>
<reference key="3">
    <citation type="journal article" date="1998" name="Development">
        <title>Multiple delta genes and lateral inhibition in zebrafish primary neurogenesis.</title>
        <authorList>
            <person name="Haddon C."/>
            <person name="Smithers L."/>
            <person name="Schneider-Maunoury S."/>
            <person name="Coche T."/>
            <person name="Henrique D."/>
            <person name="Lewis J."/>
        </authorList>
    </citation>
    <scope>TISSUE SPECIFICITY</scope>
</reference>
<reference key="4">
    <citation type="journal article" date="1999" name="Curr. Biol.">
        <title>Delta-mediated specification of midline cell fates in zebrafish embryos.</title>
        <authorList>
            <person name="Appel B."/>
            <person name="Fritz A."/>
            <person name="Westerfield M."/>
            <person name="Grunwald D.J."/>
            <person name="Eisen J.S."/>
            <person name="Riley B.B."/>
        </authorList>
    </citation>
    <scope>FUNCTION</scope>
    <scope>MUTAGENESIS OF CYS-270</scope>
    <scope>TISSUE SPECIFICITY</scope>
</reference>
<reference key="5">
    <citation type="journal article" date="1999" name="Development">
        <title>The deltaA gene of zebrafish mediates lateral inhibition of hair cells in the inner ear and is regulated by pax2.1.</title>
        <authorList>
            <person name="Riley B.B."/>
            <person name="Chiang M.-Y."/>
            <person name="Farmer L."/>
            <person name="Heck R."/>
        </authorList>
    </citation>
    <scope>FUNCTION</scope>
</reference>
<reference key="6">
    <citation type="journal article" date="2004" name="Dev. Biol.">
        <title>Three modules of zebrafish Mind bomb work cooperatively to promote Delta ubiquitination and endocytosis.</title>
        <authorList>
            <person name="Chen W."/>
            <person name="Corliss D.C."/>
        </authorList>
    </citation>
    <scope>INTERACTION WITH MIB</scope>
    <scope>UBIQUITINATION</scope>
</reference>
<reference key="7">
    <citation type="journal article" date="2004" name="Dev. Cell">
        <title>Notch activation regulates the segregation and differentiation of rhombomere boundary cells in the zebrafish hindbrain.</title>
        <authorList>
            <person name="Cheng Y.-C."/>
            <person name="Amoyel M."/>
            <person name="Qiu X."/>
            <person name="Jiang Y.-J."/>
            <person name="Xu Q."/>
            <person name="Wilkinson D.G."/>
        </authorList>
    </citation>
    <scope>TISSUE SPECIFICITY</scope>
</reference>
<reference key="8">
    <citation type="journal article" date="2005" name="Development">
        <title>Wnt1 regulates neurogenesis and mediates lateral inhibition of boundary cell specification in the zebrafish hindbrain.</title>
        <authorList>
            <person name="Amoyel M."/>
            <person name="Cheng Y.-C."/>
            <person name="Jiang Y.-J."/>
            <person name="Wilkinson D.G."/>
        </authorList>
    </citation>
    <scope>FUNCTION</scope>
    <scope>TISSUE SPECIFICITY</scope>
</reference>
<reference key="9">
    <citation type="journal article" date="2008" name="Nat. Cell Biol.">
        <title>d-Asb11 is an essential mediator of canonical Delta-Notch signalling.</title>
        <authorList>
            <person name="Diks S.H."/>
            <person name="Sartori da Silva M.A."/>
            <person name="Hillebrands J.L."/>
            <person name="Bink R.J."/>
            <person name="Versteeg H.H."/>
            <person name="van Rooijen C."/>
            <person name="Brouwers A."/>
            <person name="Chitnis A.B."/>
            <person name="Peppelenbosch M.P."/>
            <person name="Zivkovic D."/>
        </authorList>
    </citation>
    <scope>UBIQUITINATION</scope>
</reference>
<keyword id="KW-0037">Angiogenesis</keyword>
<keyword id="KW-0106">Calcium</keyword>
<keyword id="KW-0217">Developmental protein</keyword>
<keyword id="KW-0221">Differentiation</keyword>
<keyword id="KW-1015">Disulfide bond</keyword>
<keyword id="KW-0245">EGF-like domain</keyword>
<keyword id="KW-0325">Glycoprotein</keyword>
<keyword id="KW-0472">Membrane</keyword>
<keyword id="KW-0524">Neurogenesis</keyword>
<keyword id="KW-0914">Notch signaling pathway</keyword>
<keyword id="KW-1185">Reference proteome</keyword>
<keyword id="KW-0677">Repeat</keyword>
<keyword id="KW-0732">Signal</keyword>
<keyword id="KW-0812">Transmembrane</keyword>
<keyword id="KW-1133">Transmembrane helix</keyword>
<keyword id="KW-0832">Ubl conjugation</keyword>
<accession>Q6DI48</accession>
<accession>O57462</accession>
<dbReference type="EMBL" id="AF030031">
    <property type="protein sequence ID" value="AAC41249.1"/>
    <property type="status" value="ALT_SEQ"/>
    <property type="molecule type" value="mRNA"/>
</dbReference>
<dbReference type="EMBL" id="BC075742">
    <property type="protein sequence ID" value="AAH75742.1"/>
    <property type="molecule type" value="mRNA"/>
</dbReference>
<dbReference type="SMR" id="Q6DI48"/>
<dbReference type="BioGRID" id="78367">
    <property type="interactions" value="2"/>
</dbReference>
<dbReference type="FunCoup" id="Q6DI48">
    <property type="interactions" value="2"/>
</dbReference>
<dbReference type="STRING" id="7955.ENSDARP00000013374"/>
<dbReference type="GlyCosmos" id="Q6DI48">
    <property type="glycosylation" value="1 site, No reported glycans"/>
</dbReference>
<dbReference type="PaxDb" id="7955-ENSDARP00000003059"/>
<dbReference type="AGR" id="ZFIN:ZDB-GENE-980526-29"/>
<dbReference type="ZFIN" id="ZDB-GENE-980526-29">
    <property type="gene designation" value="dla"/>
</dbReference>
<dbReference type="eggNOG" id="KOG1217">
    <property type="taxonomic scope" value="Eukaryota"/>
</dbReference>
<dbReference type="InParanoid" id="Q6DI48"/>
<dbReference type="PhylomeDB" id="Q6DI48"/>
<dbReference type="Reactome" id="R-DRE-2979096">
    <property type="pathway name" value="NOTCH2 Activation and Transmission of Signal to the Nucleus"/>
</dbReference>
<dbReference type="SignaLink" id="Q6DI48"/>
<dbReference type="PRO" id="PR:Q6DI48"/>
<dbReference type="Proteomes" id="UP000000437">
    <property type="component" value="Unplaced"/>
</dbReference>
<dbReference type="GO" id="GO:0005938">
    <property type="term" value="C:cell cortex"/>
    <property type="evidence" value="ECO:0000314"/>
    <property type="project" value="ZFIN"/>
</dbReference>
<dbReference type="GO" id="GO:0005886">
    <property type="term" value="C:plasma membrane"/>
    <property type="evidence" value="ECO:0000314"/>
    <property type="project" value="ZFIN"/>
</dbReference>
<dbReference type="GO" id="GO:0005509">
    <property type="term" value="F:calcium ion binding"/>
    <property type="evidence" value="ECO:0007669"/>
    <property type="project" value="InterPro"/>
</dbReference>
<dbReference type="GO" id="GO:0005112">
    <property type="term" value="F:Notch binding"/>
    <property type="evidence" value="ECO:0000318"/>
    <property type="project" value="GO_Central"/>
</dbReference>
<dbReference type="GO" id="GO:0001525">
    <property type="term" value="P:angiogenesis"/>
    <property type="evidence" value="ECO:0007669"/>
    <property type="project" value="UniProtKB-KW"/>
</dbReference>
<dbReference type="GO" id="GO:0021536">
    <property type="term" value="P:diencephalon development"/>
    <property type="evidence" value="ECO:0000315"/>
    <property type="project" value="ZFIN"/>
</dbReference>
<dbReference type="GO" id="GO:0009880">
    <property type="term" value="P:embryonic pattern specification"/>
    <property type="evidence" value="ECO:0000315"/>
    <property type="project" value="ZFIN"/>
</dbReference>
<dbReference type="GO" id="GO:0033504">
    <property type="term" value="P:floor plate development"/>
    <property type="evidence" value="ECO:0000315"/>
    <property type="project" value="ZFIN"/>
</dbReference>
<dbReference type="GO" id="GO:0055016">
    <property type="term" value="P:hypochord development"/>
    <property type="evidence" value="ECO:0000315"/>
    <property type="project" value="ZFIN"/>
</dbReference>
<dbReference type="GO" id="GO:0060113">
    <property type="term" value="P:inner ear receptor cell differentiation"/>
    <property type="evidence" value="ECO:0000315"/>
    <property type="project" value="ZFIN"/>
</dbReference>
<dbReference type="GO" id="GO:0030901">
    <property type="term" value="P:midbrain development"/>
    <property type="evidence" value="ECO:0000316"/>
    <property type="project" value="ZFIN"/>
</dbReference>
<dbReference type="GO" id="GO:0045746">
    <property type="term" value="P:negative regulation of Notch signaling pathway"/>
    <property type="evidence" value="ECO:0000318"/>
    <property type="project" value="GO_Central"/>
</dbReference>
<dbReference type="GO" id="GO:0014032">
    <property type="term" value="P:neural crest cell development"/>
    <property type="evidence" value="ECO:0000315"/>
    <property type="project" value="ZFIN"/>
</dbReference>
<dbReference type="GO" id="GO:0022008">
    <property type="term" value="P:neurogenesis"/>
    <property type="evidence" value="ECO:0000315"/>
    <property type="project" value="ZFIN"/>
</dbReference>
<dbReference type="GO" id="GO:0007219">
    <property type="term" value="P:Notch signaling pathway"/>
    <property type="evidence" value="ECO:0000318"/>
    <property type="project" value="GO_Central"/>
</dbReference>
<dbReference type="GO" id="GO:0060034">
    <property type="term" value="P:notochord cell differentiation"/>
    <property type="evidence" value="ECO:0000315"/>
    <property type="project" value="ZFIN"/>
</dbReference>
<dbReference type="GO" id="GO:0008593">
    <property type="term" value="P:regulation of Notch signaling pathway"/>
    <property type="evidence" value="ECO:0000315"/>
    <property type="project" value="ZFIN"/>
</dbReference>
<dbReference type="GO" id="GO:0021514">
    <property type="term" value="P:ventral spinal cord interneuron differentiation"/>
    <property type="evidence" value="ECO:0000315"/>
    <property type="project" value="ZFIN"/>
</dbReference>
<dbReference type="CDD" id="cd00054">
    <property type="entry name" value="EGF_CA"/>
    <property type="match status" value="6"/>
</dbReference>
<dbReference type="FunFam" id="2.10.25.10:FF:000018">
    <property type="entry name" value="Delta-like 1"/>
    <property type="match status" value="1"/>
</dbReference>
<dbReference type="FunFam" id="2.10.25.10:FF:000012">
    <property type="entry name" value="Delta-like protein"/>
    <property type="match status" value="5"/>
</dbReference>
<dbReference type="FunFam" id="2.10.25.10:FF:000064">
    <property type="entry name" value="Delta-like protein"/>
    <property type="match status" value="1"/>
</dbReference>
<dbReference type="FunFam" id="2.10.25.140:FF:000001">
    <property type="entry name" value="Delta-like protein"/>
    <property type="match status" value="1"/>
</dbReference>
<dbReference type="FunFam" id="2.60.40.3510:FF:000002">
    <property type="entry name" value="Delta-like protein"/>
    <property type="match status" value="1"/>
</dbReference>
<dbReference type="Gene3D" id="2.10.25.140">
    <property type="match status" value="1"/>
</dbReference>
<dbReference type="Gene3D" id="2.60.40.3510">
    <property type="match status" value="1"/>
</dbReference>
<dbReference type="Gene3D" id="2.10.25.10">
    <property type="entry name" value="Laminin"/>
    <property type="match status" value="7"/>
</dbReference>
<dbReference type="InterPro" id="IPR001774">
    <property type="entry name" value="DSL"/>
</dbReference>
<dbReference type="InterPro" id="IPR001881">
    <property type="entry name" value="EGF-like_Ca-bd_dom"/>
</dbReference>
<dbReference type="InterPro" id="IPR013032">
    <property type="entry name" value="EGF-like_CS"/>
</dbReference>
<dbReference type="InterPro" id="IPR000742">
    <property type="entry name" value="EGF-like_dom"/>
</dbReference>
<dbReference type="InterPro" id="IPR000152">
    <property type="entry name" value="EGF-type_Asp/Asn_hydroxyl_site"/>
</dbReference>
<dbReference type="InterPro" id="IPR018097">
    <property type="entry name" value="EGF_Ca-bd_CS"/>
</dbReference>
<dbReference type="InterPro" id="IPR009030">
    <property type="entry name" value="Growth_fac_rcpt_cys_sf"/>
</dbReference>
<dbReference type="InterPro" id="IPR051022">
    <property type="entry name" value="Notch_Cell-Fate_Det"/>
</dbReference>
<dbReference type="InterPro" id="IPR011651">
    <property type="entry name" value="Notch_ligand_N"/>
</dbReference>
<dbReference type="PANTHER" id="PTHR24049">
    <property type="entry name" value="CRUMBS FAMILY MEMBER"/>
    <property type="match status" value="1"/>
</dbReference>
<dbReference type="PANTHER" id="PTHR24049:SF22">
    <property type="entry name" value="DROSOPHILA CRUMBS HOMOLOG"/>
    <property type="match status" value="1"/>
</dbReference>
<dbReference type="Pfam" id="PF01414">
    <property type="entry name" value="DSL"/>
    <property type="match status" value="1"/>
</dbReference>
<dbReference type="Pfam" id="PF00008">
    <property type="entry name" value="EGF"/>
    <property type="match status" value="5"/>
</dbReference>
<dbReference type="Pfam" id="PF21700">
    <property type="entry name" value="EGF_DL_JAG"/>
    <property type="match status" value="1"/>
</dbReference>
<dbReference type="Pfam" id="PF12661">
    <property type="entry name" value="hEGF"/>
    <property type="match status" value="1"/>
</dbReference>
<dbReference type="Pfam" id="PF07657">
    <property type="entry name" value="MNNL"/>
    <property type="match status" value="1"/>
</dbReference>
<dbReference type="PRINTS" id="PR00010">
    <property type="entry name" value="EGFBLOOD"/>
</dbReference>
<dbReference type="SMART" id="SM00051">
    <property type="entry name" value="DSL"/>
    <property type="match status" value="1"/>
</dbReference>
<dbReference type="SMART" id="SM00181">
    <property type="entry name" value="EGF"/>
    <property type="match status" value="8"/>
</dbReference>
<dbReference type="SMART" id="SM00179">
    <property type="entry name" value="EGF_CA"/>
    <property type="match status" value="6"/>
</dbReference>
<dbReference type="SUPFAM" id="SSF57196">
    <property type="entry name" value="EGF/Laminin"/>
    <property type="match status" value="3"/>
</dbReference>
<dbReference type="SUPFAM" id="SSF57184">
    <property type="entry name" value="Growth factor receptor domain"/>
    <property type="match status" value="1"/>
</dbReference>
<dbReference type="PROSITE" id="PS00010">
    <property type="entry name" value="ASX_HYDROXYL"/>
    <property type="match status" value="2"/>
</dbReference>
<dbReference type="PROSITE" id="PS51051">
    <property type="entry name" value="DSL"/>
    <property type="match status" value="1"/>
</dbReference>
<dbReference type="PROSITE" id="PS00022">
    <property type="entry name" value="EGF_1"/>
    <property type="match status" value="8"/>
</dbReference>
<dbReference type="PROSITE" id="PS01186">
    <property type="entry name" value="EGF_2"/>
    <property type="match status" value="8"/>
</dbReference>
<dbReference type="PROSITE" id="PS50026">
    <property type="entry name" value="EGF_3"/>
    <property type="match status" value="7"/>
</dbReference>
<dbReference type="PROSITE" id="PS01187">
    <property type="entry name" value="EGF_CA"/>
    <property type="match status" value="1"/>
</dbReference>
<proteinExistence type="evidence at protein level"/>
<protein>
    <recommendedName>
        <fullName>Delta-like protein A</fullName>
        <shortName>DeltaA</shortName>
    </recommendedName>
</protein>
<comment type="function">
    <text evidence="6 7 10 13">Acts as a ligand for Notch receptors and is involved in primary neurogenesis. Can activate Notch receptors, thereby playing a key role in lateral inhibition, a process that prevents the immediate neighbors of each nascent neural cell from simultaneously embarking on neural differentiation. Required for boundary formation during segmentation of the hindbrain. Required for midline cell fate specification prior to germ layer formation; regulates specification of floorplate, notochord and hypochord. In inner ear, it prevents adjacent cells from adopting the same cell fate. Plays a role in angiogenesis.</text>
</comment>
<comment type="subunit">
    <text evidence="8">Interacts with mib.</text>
</comment>
<comment type="subcellular location">
    <subcellularLocation>
        <location evidence="1">Membrane</location>
        <topology evidence="1">Single-pass type I membrane protein</topology>
    </subcellularLocation>
</comment>
<comment type="tissue specificity">
    <text evidence="6 9 10 12 13">Expressed in nervous system. In the developing nervous system, it is expressed in overlapping regions with deltaB (dlb) and deltaD (dld); in the neural plate, dla is expressed in patches of contiguous cells with dld, while dlb is confined to scattered cells within those patches that will differentiate as neurons. In 24 hours embryos, expressed in the hindbrain in stripes adjacent to rhombomere boundaries, but not in the actual boundary cells. During gastrulation and tail formation, expressed in embryonic midline cells. Expressed in hair cells of inner ear.</text>
</comment>
<comment type="developmental stage">
    <text evidence="13">Initiated in the neuroectoderm before that of dld. In the developing trunk neural plate and neural tube, it is initiated in the epiblast prior to completion of gastrulation. At the 2- to 3-somite stage (10.5 hours) low levels are distributed throughout the trunk CNS, with cells expressing higher levels found in the medial and lateral regions of the neural plate. These regions correspond to the positions at which primary motoneurons and Rohon Beard neurons (RBs) originate. Cells expressing high levels do not form contiguous domains. Rather, single cells or small clusters of several cells showing high expression are interspersed with cells having lower expression. Expression is specific to the developing nervous system, and continues to be expressed broadly in the CNS throughout neurogenesis. Expressed in cells specified for neuronal fates. At 24 hours, and throughout later embryogenesis, it is broadly expressed in the spinal cord, suggesting that it is expressed by many types of cells. Expressed as neuronal specification occurs and is subsequently down-regulated in cells that have acquired specific neuronal fates.</text>
</comment>
<comment type="PTM">
    <text evidence="8 11">Ubiquitinated by mib, leading to its endocytosis and subsequent degradation (PubMed:15013799). Ubiquitinated by the ECS(ASB11) complex, leading to its degradation by the proteasome (PubMed:18776899).</text>
</comment>
<comment type="sequence caution" evidence="14">
    <conflict type="frameshift">
        <sequence resource="EMBL-CDS" id="AAC41249"/>
    </conflict>
</comment>
<organism>
    <name type="scientific">Danio rerio</name>
    <name type="common">Zebrafish</name>
    <name type="synonym">Brachydanio rerio</name>
    <dbReference type="NCBI Taxonomy" id="7955"/>
    <lineage>
        <taxon>Eukaryota</taxon>
        <taxon>Metazoa</taxon>
        <taxon>Chordata</taxon>
        <taxon>Craniata</taxon>
        <taxon>Vertebrata</taxon>
        <taxon>Euteleostomi</taxon>
        <taxon>Actinopterygii</taxon>
        <taxon>Neopterygii</taxon>
        <taxon>Teleostei</taxon>
        <taxon>Ostariophysi</taxon>
        <taxon>Cypriniformes</taxon>
        <taxon>Danionidae</taxon>
        <taxon>Danioninae</taxon>
        <taxon>Danio</taxon>
    </lineage>
</organism>
<gene>
    <name type="primary">dla</name>
</gene>
<evidence type="ECO:0000250" key="1"/>
<evidence type="ECO:0000255" key="2"/>
<evidence type="ECO:0000255" key="3">
    <source>
        <dbReference type="PROSITE-ProRule" id="PRU00076"/>
    </source>
</evidence>
<evidence type="ECO:0000255" key="4">
    <source>
        <dbReference type="PROSITE-ProRule" id="PRU00377"/>
    </source>
</evidence>
<evidence type="ECO:0000256" key="5">
    <source>
        <dbReference type="SAM" id="MobiDB-lite"/>
    </source>
</evidence>
<evidence type="ECO:0000269" key="6">
    <source>
    </source>
</evidence>
<evidence type="ECO:0000269" key="7">
    <source>
    </source>
</evidence>
<evidence type="ECO:0000269" key="8">
    <source>
    </source>
</evidence>
<evidence type="ECO:0000269" key="9">
    <source>
    </source>
</evidence>
<evidence type="ECO:0000269" key="10">
    <source>
    </source>
</evidence>
<evidence type="ECO:0000269" key="11">
    <source>
    </source>
</evidence>
<evidence type="ECO:0000269" key="12">
    <source>
    </source>
</evidence>
<evidence type="ECO:0000269" key="13">
    <source>
    </source>
</evidence>
<evidence type="ECO:0000305" key="14"/>
<name>DLLA_DANRE</name>
<sequence length="772" mass="84969">MGRHLLLLLFSILYMLLCQASSSGVFELKLQEFLNKKGVQGNKNCCKGGLTTSYQQCECKTFFRICLKHYQPNASPEPPCTYGGTVTPVLGSNSFQVPDTLPDGSFTNPIRMNFGFTWPGTFSLIIEALHADSKEDLTTENPERIISTMTTQRHLTVGEDWSQDLHSVGRTELKYSYRFVCDEHYYGEGCSVFCRPRDDAFGHFTCGERGEIICDAGWKGQYCTEPICLPGCDEEHGFCEKPGECKCRVGFKGRYCDECIRYPGCLHGTCQQPWQCNCQEGWGGLFCNQDLNYCTHHKPCLNGATCSNTGQGSYTCSCRPGFSGASCEIEVNECTGNPCRNGGSCTDMENTYSCTCPPGFYGKNCELSAMTCADGPCFNGGRCADNPDGGYFCQCPTGYAGFNCEKKIDHCSSSPCSNGARCVDLVNSYLCQCPDGFTGMNCDRAGDECSMYPCQNGGTCQEGASGYMCTCPPGYTGRNCSSPVSRCQHNPCHNGATCHERNNRYVCACVSGYGGRNCQFLLPDRASQIASDVPWTAVGSGVLLVLLLVVACAVVVVCVRSKVQQRRRDREDEVANGENETINNLTNNCHRDKDLAVSVVGVAPVKNINKKIDFSSDHDDLSLTTEKRSYKTRHAPADYNLVHEVKFEVKHEVKLEHAGKETTMANELSDSCEDIKCQSLQDSSECTEEKRRKRLKSDASEKSKYSESRYSESKYSESKYSESKYSDVSLYSESACASACASASTSACVDTKYKSVMVMSEEKDECVIATEV</sequence>
<feature type="signal peptide" evidence="2">
    <location>
        <begin position="1"/>
        <end position="20"/>
    </location>
</feature>
<feature type="chain" id="PRO_0000007514" description="Delta-like protein A">
    <location>
        <begin position="21"/>
        <end position="772"/>
    </location>
</feature>
<feature type="topological domain" description="Extracellular" evidence="2">
    <location>
        <begin position="21"/>
        <end position="536"/>
    </location>
</feature>
<feature type="transmembrane region" description="Helical" evidence="2">
    <location>
        <begin position="537"/>
        <end position="557"/>
    </location>
</feature>
<feature type="topological domain" description="Cytoplasmic" evidence="2">
    <location>
        <begin position="558"/>
        <end position="772"/>
    </location>
</feature>
<feature type="domain" description="DSL" evidence="4">
    <location>
        <begin position="179"/>
        <end position="223"/>
    </location>
</feature>
<feature type="domain" description="EGF-like 1" evidence="3">
    <location>
        <begin position="225"/>
        <end position="257"/>
    </location>
</feature>
<feature type="domain" description="EGF-like 2" evidence="3">
    <location>
        <begin position="257"/>
        <end position="288"/>
    </location>
</feature>
<feature type="domain" description="EGF-like 3" evidence="3">
    <location>
        <begin position="290"/>
        <end position="328"/>
    </location>
</feature>
<feature type="domain" description="EGF-like 4; calcium-binding" evidence="3">
    <location>
        <begin position="330"/>
        <end position="366"/>
    </location>
</feature>
<feature type="domain" description="EGF-like 5" evidence="3">
    <location>
        <begin position="368"/>
        <end position="405"/>
    </location>
</feature>
<feature type="domain" description="EGF-like 6" evidence="3">
    <location>
        <begin position="407"/>
        <end position="443"/>
    </location>
</feature>
<feature type="domain" description="EGF-like 7" evidence="3">
    <location>
        <begin position="445"/>
        <end position="481"/>
    </location>
</feature>
<feature type="domain" description="EGF-like 8" evidence="3">
    <location>
        <begin position="483"/>
        <end position="519"/>
    </location>
</feature>
<feature type="region of interest" description="Disordered" evidence="5">
    <location>
        <begin position="688"/>
        <end position="722"/>
    </location>
</feature>
<feature type="compositionally biased region" description="Basic and acidic residues" evidence="5">
    <location>
        <begin position="696"/>
        <end position="722"/>
    </location>
</feature>
<feature type="glycosylation site" description="N-linked (GlcNAc...) asparagine" evidence="2">
    <location>
        <position position="479"/>
    </location>
</feature>
<feature type="disulfide bond" evidence="1">
    <location>
        <begin position="181"/>
        <end position="190"/>
    </location>
</feature>
<feature type="disulfide bond" evidence="1">
    <location>
        <begin position="194"/>
        <end position="206"/>
    </location>
</feature>
<feature type="disulfide bond" evidence="1">
    <location>
        <begin position="214"/>
        <end position="223"/>
    </location>
</feature>
<feature type="disulfide bond" evidence="1">
    <location>
        <begin position="228"/>
        <end position="239"/>
    </location>
</feature>
<feature type="disulfide bond" evidence="1">
    <location>
        <begin position="232"/>
        <end position="245"/>
    </location>
</feature>
<feature type="disulfide bond" evidence="1">
    <location>
        <begin position="259"/>
        <end position="270"/>
    </location>
</feature>
<feature type="disulfide bond" evidence="1">
    <location>
        <begin position="265"/>
        <end position="276"/>
    </location>
</feature>
<feature type="disulfide bond" evidence="1">
    <location>
        <begin position="278"/>
        <end position="287"/>
    </location>
</feature>
<feature type="disulfide bond" evidence="1">
    <location>
        <begin position="294"/>
        <end position="306"/>
    </location>
</feature>
<feature type="disulfide bond" evidence="1">
    <location>
        <begin position="300"/>
        <end position="316"/>
    </location>
</feature>
<feature type="disulfide bond" evidence="1">
    <location>
        <begin position="318"/>
        <end position="327"/>
    </location>
</feature>
<feature type="disulfide bond" evidence="1">
    <location>
        <begin position="334"/>
        <end position="345"/>
    </location>
</feature>
<feature type="disulfide bond" evidence="1">
    <location>
        <begin position="339"/>
        <end position="354"/>
    </location>
</feature>
<feature type="disulfide bond" evidence="1">
    <location>
        <begin position="356"/>
        <end position="365"/>
    </location>
</feature>
<feature type="disulfide bond" evidence="1">
    <location>
        <begin position="372"/>
        <end position="383"/>
    </location>
</feature>
<feature type="disulfide bond" evidence="1">
    <location>
        <begin position="377"/>
        <end position="393"/>
    </location>
</feature>
<feature type="disulfide bond" evidence="1">
    <location>
        <begin position="395"/>
        <end position="404"/>
    </location>
</feature>
<feature type="disulfide bond" evidence="1">
    <location>
        <begin position="411"/>
        <end position="422"/>
    </location>
</feature>
<feature type="disulfide bond" evidence="1">
    <location>
        <begin position="416"/>
        <end position="431"/>
    </location>
</feature>
<feature type="disulfide bond" evidence="1">
    <location>
        <begin position="433"/>
        <end position="442"/>
    </location>
</feature>
<feature type="disulfide bond" evidence="1">
    <location>
        <begin position="449"/>
        <end position="460"/>
    </location>
</feature>
<feature type="disulfide bond" evidence="1">
    <location>
        <begin position="454"/>
        <end position="469"/>
    </location>
</feature>
<feature type="disulfide bond" evidence="1">
    <location>
        <begin position="471"/>
        <end position="480"/>
    </location>
</feature>
<feature type="disulfide bond" evidence="1">
    <location>
        <begin position="487"/>
        <end position="498"/>
    </location>
</feature>
<feature type="disulfide bond" evidence="1">
    <location>
        <begin position="492"/>
        <end position="507"/>
    </location>
</feature>
<feature type="disulfide bond" evidence="1">
    <location>
        <begin position="509"/>
        <end position="518"/>
    </location>
</feature>
<feature type="mutagenesis site" description="In dla(dx2); excess numbers of early-specified neurons, reduced numbers of floorplate and hypochord cells, excess numbers of notochord cells." evidence="6">
    <original>C</original>
    <variation>Y</variation>
    <location>
        <position position="270"/>
    </location>
</feature>